<name>MYL3_BOVIN</name>
<keyword id="KW-0002">3D-structure</keyword>
<keyword id="KW-0488">Methylation</keyword>
<keyword id="KW-0505">Motor protein</keyword>
<keyword id="KW-0514">Muscle protein</keyword>
<keyword id="KW-0518">Myosin</keyword>
<keyword id="KW-0597">Phosphoprotein</keyword>
<keyword id="KW-1185">Reference proteome</keyword>
<keyword id="KW-0677">Repeat</keyword>
<comment type="function">
    <text evidence="8">Regulatory light chain of myosin. Does not bind calcium.</text>
</comment>
<comment type="subunit">
    <text>Myosin is a hexamer of 2 heavy chains and 4 light chains.</text>
</comment>
<comment type="PTM">
    <text evidence="1">N-terminus is methylated by METTL11A/NTM1.</text>
</comment>
<sequence>MAPKKPDPKKDEAKAGAKAAAAPAPAPAPPPAPEPSKEPEFDPSKIKIEFTPEQIEEFKEAFTLFDRTPKCEMKITYGQCGDVLRALGQNPTQAEVLRVLGKPKQEELNSKMMDFDTFLPMLQHISKNKDTGTYEDFVEGLRVFDKEGNGTVMGAELRHVLATLGEKLTEDEVEKLMAGQEDSNGCINYEAFVKHIMAG</sequence>
<gene>
    <name evidence="2" type="primary">MYL3</name>
</gene>
<organism>
    <name type="scientific">Bos taurus</name>
    <name type="common">Bovine</name>
    <dbReference type="NCBI Taxonomy" id="9913"/>
    <lineage>
        <taxon>Eukaryota</taxon>
        <taxon>Metazoa</taxon>
        <taxon>Chordata</taxon>
        <taxon>Craniata</taxon>
        <taxon>Vertebrata</taxon>
        <taxon>Euteleostomi</taxon>
        <taxon>Mammalia</taxon>
        <taxon>Eutheria</taxon>
        <taxon>Laurasiatheria</taxon>
        <taxon>Artiodactyla</taxon>
        <taxon>Ruminantia</taxon>
        <taxon>Pecora</taxon>
        <taxon>Bovidae</taxon>
        <taxon>Bovinae</taxon>
        <taxon>Bos</taxon>
    </lineage>
</organism>
<accession>P85100</accession>
<feature type="initiator methionine" description="Removed" evidence="3">
    <location>
        <position position="1"/>
    </location>
</feature>
<feature type="chain" id="PRO_0000283743" description="Myosin light chain 3">
    <location>
        <begin position="2"/>
        <end position="199"/>
    </location>
</feature>
<feature type="domain" description="EF-hand 1" evidence="5">
    <location>
        <begin position="53"/>
        <end position="90"/>
    </location>
</feature>
<feature type="domain" description="EF-hand 2" evidence="5">
    <location>
        <begin position="132"/>
        <end position="167"/>
    </location>
</feature>
<feature type="domain" description="EF-hand 3" evidence="8">
    <location>
        <begin position="167"/>
        <end position="199"/>
    </location>
</feature>
<feature type="region of interest" description="Disordered" evidence="6">
    <location>
        <begin position="1"/>
        <end position="44"/>
    </location>
</feature>
<feature type="compositionally biased region" description="Basic and acidic residues" evidence="6">
    <location>
        <begin position="1"/>
        <end position="15"/>
    </location>
</feature>
<feature type="compositionally biased region" description="Pro residues" evidence="6">
    <location>
        <begin position="24"/>
        <end position="34"/>
    </location>
</feature>
<feature type="compositionally biased region" description="Basic and acidic residues" evidence="6">
    <location>
        <begin position="35"/>
        <end position="44"/>
    </location>
</feature>
<feature type="modified residue" description="N,N,N-trimethylalanine" evidence="7">
    <location>
        <position position="2"/>
    </location>
</feature>
<feature type="modified residue" description="Phosphothreonine" evidence="4">
    <location>
        <position position="92"/>
    </location>
</feature>
<feature type="modified residue" description="Phosphothreonine" evidence="3">
    <location>
        <position position="131"/>
    </location>
</feature>
<feature type="modified residue" description="Phosphothreonine" evidence="4">
    <location>
        <position position="133"/>
    </location>
</feature>
<feature type="modified residue" description="Phosphotyrosine" evidence="4">
    <location>
        <position position="134"/>
    </location>
</feature>
<feature type="modified residue" description="Phosphoserine" evidence="3">
    <location>
        <position position="183"/>
    </location>
</feature>
<feature type="helix" evidence="9">
    <location>
        <begin position="43"/>
        <end position="45"/>
    </location>
</feature>
<feature type="helix" evidence="10">
    <location>
        <begin position="52"/>
        <end position="64"/>
    </location>
</feature>
<feature type="strand" evidence="9">
    <location>
        <begin position="73"/>
        <end position="76"/>
    </location>
</feature>
<feature type="turn" evidence="10">
    <location>
        <begin position="77"/>
        <end position="79"/>
    </location>
</feature>
<feature type="helix" evidence="10">
    <location>
        <begin position="80"/>
        <end position="86"/>
    </location>
</feature>
<feature type="helix" evidence="10">
    <location>
        <begin position="93"/>
        <end position="99"/>
    </location>
</feature>
<feature type="turn" evidence="10">
    <location>
        <begin position="105"/>
        <end position="109"/>
    </location>
</feature>
<feature type="strand" evidence="9">
    <location>
        <begin position="112"/>
        <end position="114"/>
    </location>
</feature>
<feature type="helix" evidence="10">
    <location>
        <begin position="115"/>
        <end position="126"/>
    </location>
</feature>
<feature type="helix" evidence="10">
    <location>
        <begin position="134"/>
        <end position="142"/>
    </location>
</feature>
<feature type="strand" evidence="10">
    <location>
        <begin position="146"/>
        <end position="150"/>
    </location>
</feature>
<feature type="helix" evidence="10">
    <location>
        <begin position="154"/>
        <end position="163"/>
    </location>
</feature>
<feature type="strand" evidence="10">
    <location>
        <begin position="164"/>
        <end position="166"/>
    </location>
</feature>
<feature type="helix" evidence="10">
    <location>
        <begin position="170"/>
        <end position="176"/>
    </location>
</feature>
<feature type="turn" evidence="10">
    <location>
        <begin position="177"/>
        <end position="179"/>
    </location>
</feature>
<feature type="helix" evidence="10">
    <location>
        <begin position="191"/>
        <end position="196"/>
    </location>
</feature>
<evidence type="ECO:0000250" key="1"/>
<evidence type="ECO:0000250" key="2">
    <source>
        <dbReference type="UniProtKB" id="P08590"/>
    </source>
</evidence>
<evidence type="ECO:0000250" key="3">
    <source>
        <dbReference type="UniProtKB" id="P09542"/>
    </source>
</evidence>
<evidence type="ECO:0000250" key="4">
    <source>
        <dbReference type="UniProtKB" id="P16409"/>
    </source>
</evidence>
<evidence type="ECO:0000255" key="5">
    <source>
        <dbReference type="PROSITE-ProRule" id="PRU00448"/>
    </source>
</evidence>
<evidence type="ECO:0000256" key="6">
    <source>
        <dbReference type="SAM" id="MobiDB-lite"/>
    </source>
</evidence>
<evidence type="ECO:0000269" key="7">
    <source>
    </source>
</evidence>
<evidence type="ECO:0000305" key="8"/>
<evidence type="ECO:0007829" key="9">
    <source>
        <dbReference type="PDB" id="5N69"/>
    </source>
</evidence>
<evidence type="ECO:0007829" key="10">
    <source>
        <dbReference type="PDB" id="6FSA"/>
    </source>
</evidence>
<protein>
    <recommendedName>
        <fullName evidence="8">Myosin light chain 3</fullName>
    </recommendedName>
    <alternativeName>
        <fullName evidence="2">Myosin light chain 1, slow-twitch muscle B/ventricular isoform</fullName>
        <shortName evidence="2">MLC1SB</shortName>
    </alternativeName>
</protein>
<dbReference type="EMBL" id="AAFC03056301">
    <property type="status" value="NOT_ANNOTATED_CDS"/>
    <property type="molecule type" value="Genomic_DNA"/>
</dbReference>
<dbReference type="RefSeq" id="NP_001069969.2">
    <property type="nucleotide sequence ID" value="NM_001076501.2"/>
</dbReference>
<dbReference type="PDB" id="5N69">
    <property type="method" value="X-ray"/>
    <property type="resolution" value="2.45 A"/>
    <property type="chains" value="G/H=1-199"/>
</dbReference>
<dbReference type="PDB" id="6FSA">
    <property type="method" value="X-ray"/>
    <property type="resolution" value="2.33 A"/>
    <property type="chains" value="D/H=1-199"/>
</dbReference>
<dbReference type="PDB" id="8QYQ">
    <property type="method" value="X-ray"/>
    <property type="resolution" value="2.61 A"/>
    <property type="chains" value="C/D=1-199"/>
</dbReference>
<dbReference type="PDB" id="8QYU">
    <property type="method" value="X-ray"/>
    <property type="resolution" value="1.96 A"/>
    <property type="chains" value="G/H=1-199"/>
</dbReference>
<dbReference type="PDBsum" id="5N69"/>
<dbReference type="PDBsum" id="6FSA"/>
<dbReference type="PDBsum" id="8QYQ"/>
<dbReference type="PDBsum" id="8QYU"/>
<dbReference type="SMR" id="P85100"/>
<dbReference type="FunCoup" id="P85100">
    <property type="interactions" value="228"/>
</dbReference>
<dbReference type="STRING" id="9913.ENSBTAP00000067018"/>
<dbReference type="iPTMnet" id="P85100"/>
<dbReference type="PaxDb" id="9913-ENSBTAP00000011047"/>
<dbReference type="Ensembl" id="ENSBTAT00000011047.6">
    <property type="protein sequence ID" value="ENSBTAP00000011047.6"/>
    <property type="gene ID" value="ENSBTAG00000008394.6"/>
</dbReference>
<dbReference type="GeneID" id="618352"/>
<dbReference type="KEGG" id="bta:618352"/>
<dbReference type="CTD" id="4634"/>
<dbReference type="VGNC" id="VGNC:31801">
    <property type="gene designation" value="MYL3"/>
</dbReference>
<dbReference type="eggNOG" id="KOG0030">
    <property type="taxonomic scope" value="Eukaryota"/>
</dbReference>
<dbReference type="GeneTree" id="ENSGT01030000234570"/>
<dbReference type="HOGENOM" id="CLU_061288_13_0_1"/>
<dbReference type="InParanoid" id="P85100"/>
<dbReference type="OrthoDB" id="5959761at2759"/>
<dbReference type="TreeFam" id="TF351553"/>
<dbReference type="Proteomes" id="UP000009136">
    <property type="component" value="Chromosome 22"/>
</dbReference>
<dbReference type="GO" id="GO:0016460">
    <property type="term" value="C:myosin II complex"/>
    <property type="evidence" value="ECO:0000318"/>
    <property type="project" value="GO_Central"/>
</dbReference>
<dbReference type="GO" id="GO:0005509">
    <property type="term" value="F:calcium ion binding"/>
    <property type="evidence" value="ECO:0007669"/>
    <property type="project" value="InterPro"/>
</dbReference>
<dbReference type="CDD" id="cd00051">
    <property type="entry name" value="EFh"/>
    <property type="match status" value="1"/>
</dbReference>
<dbReference type="FunFam" id="1.10.238.10:FF:000019">
    <property type="entry name" value="Myosin light chain 1 skeletal"/>
    <property type="match status" value="1"/>
</dbReference>
<dbReference type="FunFam" id="1.10.238.10:FF:000056">
    <property type="entry name" value="Myosin light chain 1 skeletal"/>
    <property type="match status" value="1"/>
</dbReference>
<dbReference type="Gene3D" id="1.10.238.10">
    <property type="entry name" value="EF-hand"/>
    <property type="match status" value="2"/>
</dbReference>
<dbReference type="InterPro" id="IPR050230">
    <property type="entry name" value="CALM/Myosin/TropC-like"/>
</dbReference>
<dbReference type="InterPro" id="IPR011992">
    <property type="entry name" value="EF-hand-dom_pair"/>
</dbReference>
<dbReference type="InterPro" id="IPR002048">
    <property type="entry name" value="EF_hand_dom"/>
</dbReference>
<dbReference type="PANTHER" id="PTHR23048">
    <property type="entry name" value="MYOSIN LIGHT CHAIN 1, 3"/>
    <property type="match status" value="1"/>
</dbReference>
<dbReference type="PANTHER" id="PTHR23048:SF2">
    <property type="entry name" value="MYOSIN LIGHT CHAIN 3"/>
    <property type="match status" value="1"/>
</dbReference>
<dbReference type="SUPFAM" id="SSF47473">
    <property type="entry name" value="EF-hand"/>
    <property type="match status" value="1"/>
</dbReference>
<dbReference type="PROSITE" id="PS50222">
    <property type="entry name" value="EF_HAND_2"/>
    <property type="match status" value="2"/>
</dbReference>
<proteinExistence type="evidence at protein level"/>
<reference key="1">
    <citation type="journal article" date="2009" name="Science">
        <title>The genome sequence of taurine cattle: a window to ruminant biology and evolution.</title>
        <authorList>
            <consortium name="The bovine genome sequencing and analysis consortium"/>
        </authorList>
    </citation>
    <scope>NUCLEOTIDE SEQUENCE [LARGE SCALE GENOMIC DNA]</scope>
    <source>
        <strain>Hereford</strain>
    </source>
</reference>
<reference evidence="8" key="2">
    <citation type="journal article" date="1985" name="Eur. J. Biochem.">
        <title>The widespread distribution of alpha-N-trimethylalanine as the N-terminal amino acid of light chains from vertebrate striated muscle myosins.</title>
        <authorList>
            <person name="Henry G.D."/>
            <person name="Trayer I.P."/>
            <person name="Brewer S."/>
            <person name="Levine B.A."/>
        </authorList>
    </citation>
    <scope>METHYLATION AT ALA-2</scope>
</reference>